<evidence type="ECO:0000255" key="1">
    <source>
        <dbReference type="HAMAP-Rule" id="MF_01331"/>
    </source>
</evidence>
<evidence type="ECO:0000305" key="2"/>
<name>RL22_MESFL</name>
<sequence length="112" mass="12586">MEAKAYLNMIRISPRKVRLVADTIRNKPVAAAIATLYNLDKRSAEPVLKLLNSAIANAVNNNGMDADKLFVKTIFVNEGPTLKRFRPRAHGRAYEILKRTSHVTIIVSDERI</sequence>
<comment type="function">
    <text evidence="1">This protein binds specifically to 23S rRNA; its binding is stimulated by other ribosomal proteins, e.g. L4, L17, and L20. It is important during the early stages of 50S assembly. It makes multiple contacts with different domains of the 23S rRNA in the assembled 50S subunit and ribosome (By similarity).</text>
</comment>
<comment type="function">
    <text evidence="1">The globular domain of the protein is located near the polypeptide exit tunnel on the outside of the subunit, while an extended beta-hairpin is found that lines the wall of the exit tunnel in the center of the 70S ribosome.</text>
</comment>
<comment type="subunit">
    <text evidence="1">Part of the 50S ribosomal subunit.</text>
</comment>
<comment type="similarity">
    <text evidence="1">Belongs to the universal ribosomal protein uL22 family.</text>
</comment>
<dbReference type="EMBL" id="AE017263">
    <property type="protein sequence ID" value="AAT75484.1"/>
    <property type="molecule type" value="Genomic_DNA"/>
</dbReference>
<dbReference type="RefSeq" id="WP_011183025.1">
    <property type="nucleotide sequence ID" value="NC_006055.1"/>
</dbReference>
<dbReference type="RefSeq" id="YP_053368.1">
    <property type="nucleotide sequence ID" value="NC_006055.1"/>
</dbReference>
<dbReference type="SMR" id="Q6F1Y9"/>
<dbReference type="STRING" id="265311.Mfl128"/>
<dbReference type="PaxDb" id="265311-Mfl128"/>
<dbReference type="EnsemblBacteria" id="AAT75484">
    <property type="protein sequence ID" value="AAT75484"/>
    <property type="gene ID" value="Mfl128"/>
</dbReference>
<dbReference type="GeneID" id="2897616"/>
<dbReference type="KEGG" id="mfl:Mfl128"/>
<dbReference type="PATRIC" id="fig|265311.5.peg.129"/>
<dbReference type="eggNOG" id="COG0091">
    <property type="taxonomic scope" value="Bacteria"/>
</dbReference>
<dbReference type="HOGENOM" id="CLU_083987_3_3_14"/>
<dbReference type="OrthoDB" id="9805969at2"/>
<dbReference type="Proteomes" id="UP000006647">
    <property type="component" value="Chromosome"/>
</dbReference>
<dbReference type="GO" id="GO:0022625">
    <property type="term" value="C:cytosolic large ribosomal subunit"/>
    <property type="evidence" value="ECO:0007669"/>
    <property type="project" value="TreeGrafter"/>
</dbReference>
<dbReference type="GO" id="GO:0019843">
    <property type="term" value="F:rRNA binding"/>
    <property type="evidence" value="ECO:0007669"/>
    <property type="project" value="UniProtKB-UniRule"/>
</dbReference>
<dbReference type="GO" id="GO:0003735">
    <property type="term" value="F:structural constituent of ribosome"/>
    <property type="evidence" value="ECO:0007669"/>
    <property type="project" value="InterPro"/>
</dbReference>
<dbReference type="GO" id="GO:0006412">
    <property type="term" value="P:translation"/>
    <property type="evidence" value="ECO:0007669"/>
    <property type="project" value="UniProtKB-UniRule"/>
</dbReference>
<dbReference type="CDD" id="cd00336">
    <property type="entry name" value="Ribosomal_L22"/>
    <property type="match status" value="1"/>
</dbReference>
<dbReference type="Gene3D" id="3.90.470.10">
    <property type="entry name" value="Ribosomal protein L22/L17"/>
    <property type="match status" value="1"/>
</dbReference>
<dbReference type="HAMAP" id="MF_01331_B">
    <property type="entry name" value="Ribosomal_uL22_B"/>
    <property type="match status" value="1"/>
</dbReference>
<dbReference type="InterPro" id="IPR001063">
    <property type="entry name" value="Ribosomal_uL22"/>
</dbReference>
<dbReference type="InterPro" id="IPR005727">
    <property type="entry name" value="Ribosomal_uL22_bac/chlpt-type"/>
</dbReference>
<dbReference type="InterPro" id="IPR047867">
    <property type="entry name" value="Ribosomal_uL22_bac/org-type"/>
</dbReference>
<dbReference type="InterPro" id="IPR018260">
    <property type="entry name" value="Ribosomal_uL22_CS"/>
</dbReference>
<dbReference type="InterPro" id="IPR036394">
    <property type="entry name" value="Ribosomal_uL22_sf"/>
</dbReference>
<dbReference type="NCBIfam" id="TIGR01044">
    <property type="entry name" value="rplV_bact"/>
    <property type="match status" value="1"/>
</dbReference>
<dbReference type="PANTHER" id="PTHR13501">
    <property type="entry name" value="CHLOROPLAST 50S RIBOSOMAL PROTEIN L22-RELATED"/>
    <property type="match status" value="1"/>
</dbReference>
<dbReference type="PANTHER" id="PTHR13501:SF8">
    <property type="entry name" value="LARGE RIBOSOMAL SUBUNIT PROTEIN UL22M"/>
    <property type="match status" value="1"/>
</dbReference>
<dbReference type="Pfam" id="PF00237">
    <property type="entry name" value="Ribosomal_L22"/>
    <property type="match status" value="1"/>
</dbReference>
<dbReference type="SUPFAM" id="SSF54843">
    <property type="entry name" value="Ribosomal protein L22"/>
    <property type="match status" value="1"/>
</dbReference>
<dbReference type="PROSITE" id="PS00464">
    <property type="entry name" value="RIBOSOMAL_L22"/>
    <property type="match status" value="1"/>
</dbReference>
<accession>Q6F1Y9</accession>
<feature type="chain" id="PRO_0000243167" description="Large ribosomal subunit protein uL22">
    <location>
        <begin position="1"/>
        <end position="112"/>
    </location>
</feature>
<keyword id="KW-1185">Reference proteome</keyword>
<keyword id="KW-0687">Ribonucleoprotein</keyword>
<keyword id="KW-0689">Ribosomal protein</keyword>
<keyword id="KW-0694">RNA-binding</keyword>
<keyword id="KW-0699">rRNA-binding</keyword>
<reference key="1">
    <citation type="submission" date="2004-06" db="EMBL/GenBank/DDBJ databases">
        <authorList>
            <person name="Birren B.W."/>
            <person name="Stange-Thomann N."/>
            <person name="Hafez N."/>
            <person name="DeCaprio D."/>
            <person name="Fisher S."/>
            <person name="Butler J."/>
            <person name="Elkins T."/>
            <person name="Kodira C.D."/>
            <person name="Major J."/>
            <person name="Wang S."/>
            <person name="Nicol R."/>
            <person name="Nusbaum C."/>
        </authorList>
    </citation>
    <scope>NUCLEOTIDE SEQUENCE [LARGE SCALE GENOMIC DNA]</scope>
    <source>
        <strain>ATCC 33453 / NBRC 100688 / NCTC 11704 / L1</strain>
    </source>
</reference>
<proteinExistence type="inferred from homology"/>
<protein>
    <recommendedName>
        <fullName evidence="1">Large ribosomal subunit protein uL22</fullName>
    </recommendedName>
    <alternativeName>
        <fullName evidence="2">50S ribosomal protein L22</fullName>
    </alternativeName>
</protein>
<organism>
    <name type="scientific">Mesoplasma florum (strain ATCC 33453 / NBRC 100688 / NCTC 11704 / L1)</name>
    <name type="common">Acholeplasma florum</name>
    <dbReference type="NCBI Taxonomy" id="265311"/>
    <lineage>
        <taxon>Bacteria</taxon>
        <taxon>Bacillati</taxon>
        <taxon>Mycoplasmatota</taxon>
        <taxon>Mollicutes</taxon>
        <taxon>Entomoplasmatales</taxon>
        <taxon>Entomoplasmataceae</taxon>
        <taxon>Mesoplasma</taxon>
    </lineage>
</organism>
<gene>
    <name evidence="1" type="primary">rplV</name>
    <name type="ordered locus">Mfl128</name>
</gene>